<proteinExistence type="evidence at protein level"/>
<comment type="function">
    <text evidence="1">May function as transcription factor capable of interacting with purine rich repeats (GA repeats).</text>
</comment>
<comment type="subunit">
    <text evidence="2">Heterotetramer of two alpha and two beta subunits. The C-terminal is necessary for the formation of a heterotetrameric GABP-alpha-2/beta-2 complex, and also facilitates homotypic dimerization. Interacts with ADGRB2.</text>
</comment>
<comment type="interaction">
    <interactant intactId="EBI-8468945">
        <id>Q8TAK5</id>
    </interactant>
    <interactant intactId="EBI-9641086">
        <id>P21333-2</id>
        <label>FLNA</label>
    </interactant>
    <organismsDiffer>false</organismsDiffer>
    <experiments>3</experiments>
</comment>
<comment type="interaction">
    <interactant intactId="EBI-8468945">
        <id>Q8TAK5</id>
    </interactant>
    <interactant intactId="EBI-638925">
        <id>Q06546</id>
        <label>GABPA</label>
    </interactant>
    <organismsDiffer>false</organismsDiffer>
    <experiments>7</experiments>
</comment>
<comment type="interaction">
    <interactant intactId="EBI-8468945">
        <id>Q8TAK5</id>
    </interactant>
    <interactant intactId="EBI-739467">
        <id>Q9H8Y8</id>
        <label>GORASP2</label>
    </interactant>
    <organismsDiffer>false</organismsDiffer>
    <experiments>6</experiments>
</comment>
<comment type="interaction">
    <interactant intactId="EBI-8468945">
        <id>Q8TAK5</id>
    </interactant>
    <interactant intactId="EBI-2341787">
        <id>Q17RB8</id>
        <label>LONRF1</label>
    </interactant>
    <organismsDiffer>false</organismsDiffer>
    <experiments>3</experiments>
</comment>
<comment type="interaction">
    <interactant intactId="EBI-8468945">
        <id>Q8TAK5</id>
    </interactant>
    <interactant intactId="EBI-473160">
        <id>Q8N2W9</id>
        <label>PIAS4</label>
    </interactant>
    <organismsDiffer>false</organismsDiffer>
    <experiments>3</experiments>
</comment>
<comment type="interaction">
    <interactant intactId="EBI-8468945">
        <id>Q8TAK5</id>
    </interactant>
    <interactant intactId="EBI-1053651">
        <id>P08579</id>
        <label>SNRPB2</label>
    </interactant>
    <organismsDiffer>false</organismsDiffer>
    <experiments>3</experiments>
</comment>
<comment type="interaction">
    <interactant intactId="EBI-8468945">
        <id>Q8TAK5</id>
    </interactant>
    <interactant intactId="EBI-2559818">
        <id>Q8NCE0</id>
        <label>TSEN2</label>
    </interactant>
    <organismsDiffer>false</organismsDiffer>
    <experiments>3</experiments>
</comment>
<comment type="interaction">
    <interactant intactId="EBI-8468945">
        <id>Q8TAK5</id>
    </interactant>
    <interactant intactId="EBI-2107455">
        <id>Q08AM6</id>
        <label>VAC14</label>
    </interactant>
    <organismsDiffer>false</organismsDiffer>
    <experiments>3</experiments>
</comment>
<comment type="subcellular location">
    <subcellularLocation>
        <location evidence="1">Nucleus</location>
    </subcellularLocation>
</comment>
<gene>
    <name type="primary">GABPB2</name>
</gene>
<reference key="1">
    <citation type="journal article" date="2004" name="Nat. Genet.">
        <title>Complete sequencing and characterization of 21,243 full-length human cDNAs.</title>
        <authorList>
            <person name="Ota T."/>
            <person name="Suzuki Y."/>
            <person name="Nishikawa T."/>
            <person name="Otsuki T."/>
            <person name="Sugiyama T."/>
            <person name="Irie R."/>
            <person name="Wakamatsu A."/>
            <person name="Hayashi K."/>
            <person name="Sato H."/>
            <person name="Nagai K."/>
            <person name="Kimura K."/>
            <person name="Makita H."/>
            <person name="Sekine M."/>
            <person name="Obayashi M."/>
            <person name="Nishi T."/>
            <person name="Shibahara T."/>
            <person name="Tanaka T."/>
            <person name="Ishii S."/>
            <person name="Yamamoto J."/>
            <person name="Saito K."/>
            <person name="Kawai Y."/>
            <person name="Isono Y."/>
            <person name="Nakamura Y."/>
            <person name="Nagahari K."/>
            <person name="Murakami K."/>
            <person name="Yasuda T."/>
            <person name="Iwayanagi T."/>
            <person name="Wagatsuma M."/>
            <person name="Shiratori A."/>
            <person name="Sudo H."/>
            <person name="Hosoiri T."/>
            <person name="Kaku Y."/>
            <person name="Kodaira H."/>
            <person name="Kondo H."/>
            <person name="Sugawara M."/>
            <person name="Takahashi M."/>
            <person name="Kanda K."/>
            <person name="Yokoi T."/>
            <person name="Furuya T."/>
            <person name="Kikkawa E."/>
            <person name="Omura Y."/>
            <person name="Abe K."/>
            <person name="Kamihara K."/>
            <person name="Katsuta N."/>
            <person name="Sato K."/>
            <person name="Tanikawa M."/>
            <person name="Yamazaki M."/>
            <person name="Ninomiya K."/>
            <person name="Ishibashi T."/>
            <person name="Yamashita H."/>
            <person name="Murakawa K."/>
            <person name="Fujimori K."/>
            <person name="Tanai H."/>
            <person name="Kimata M."/>
            <person name="Watanabe M."/>
            <person name="Hiraoka S."/>
            <person name="Chiba Y."/>
            <person name="Ishida S."/>
            <person name="Ono Y."/>
            <person name="Takiguchi S."/>
            <person name="Watanabe S."/>
            <person name="Yosida M."/>
            <person name="Hotuta T."/>
            <person name="Kusano J."/>
            <person name="Kanehori K."/>
            <person name="Takahashi-Fujii A."/>
            <person name="Hara H."/>
            <person name="Tanase T.-O."/>
            <person name="Nomura Y."/>
            <person name="Togiya S."/>
            <person name="Komai F."/>
            <person name="Hara R."/>
            <person name="Takeuchi K."/>
            <person name="Arita M."/>
            <person name="Imose N."/>
            <person name="Musashino K."/>
            <person name="Yuuki H."/>
            <person name="Oshima A."/>
            <person name="Sasaki N."/>
            <person name="Aotsuka S."/>
            <person name="Yoshikawa Y."/>
            <person name="Matsunawa H."/>
            <person name="Ichihara T."/>
            <person name="Shiohata N."/>
            <person name="Sano S."/>
            <person name="Moriya S."/>
            <person name="Momiyama H."/>
            <person name="Satoh N."/>
            <person name="Takami S."/>
            <person name="Terashima Y."/>
            <person name="Suzuki O."/>
            <person name="Nakagawa S."/>
            <person name="Senoh A."/>
            <person name="Mizoguchi H."/>
            <person name="Goto Y."/>
            <person name="Shimizu F."/>
            <person name="Wakebe H."/>
            <person name="Hishigaki H."/>
            <person name="Watanabe T."/>
            <person name="Sugiyama A."/>
            <person name="Takemoto M."/>
            <person name="Kawakami B."/>
            <person name="Yamazaki M."/>
            <person name="Watanabe K."/>
            <person name="Kumagai A."/>
            <person name="Itakura S."/>
            <person name="Fukuzumi Y."/>
            <person name="Fujimori Y."/>
            <person name="Komiyama M."/>
            <person name="Tashiro H."/>
            <person name="Tanigami A."/>
            <person name="Fujiwara T."/>
            <person name="Ono T."/>
            <person name="Yamada K."/>
            <person name="Fujii Y."/>
            <person name="Ozaki K."/>
            <person name="Hirao M."/>
            <person name="Ohmori Y."/>
            <person name="Kawabata A."/>
            <person name="Hikiji T."/>
            <person name="Kobatake N."/>
            <person name="Inagaki H."/>
            <person name="Ikema Y."/>
            <person name="Okamoto S."/>
            <person name="Okitani R."/>
            <person name="Kawakami T."/>
            <person name="Noguchi S."/>
            <person name="Itoh T."/>
            <person name="Shigeta K."/>
            <person name="Senba T."/>
            <person name="Matsumura K."/>
            <person name="Nakajima Y."/>
            <person name="Mizuno T."/>
            <person name="Morinaga M."/>
            <person name="Sasaki M."/>
            <person name="Togashi T."/>
            <person name="Oyama M."/>
            <person name="Hata H."/>
            <person name="Watanabe M."/>
            <person name="Komatsu T."/>
            <person name="Mizushima-Sugano J."/>
            <person name="Satoh T."/>
            <person name="Shirai Y."/>
            <person name="Takahashi Y."/>
            <person name="Nakagawa K."/>
            <person name="Okumura K."/>
            <person name="Nagase T."/>
            <person name="Nomura N."/>
            <person name="Kikuchi H."/>
            <person name="Masuho Y."/>
            <person name="Yamashita R."/>
            <person name="Nakai K."/>
            <person name="Yada T."/>
            <person name="Nakamura Y."/>
            <person name="Ohara O."/>
            <person name="Isogai T."/>
            <person name="Sugano S."/>
        </authorList>
    </citation>
    <scope>NUCLEOTIDE SEQUENCE [LARGE SCALE MRNA]</scope>
</reference>
<reference key="2">
    <citation type="journal article" date="2006" name="Nature">
        <title>The DNA sequence and biological annotation of human chromosome 1.</title>
        <authorList>
            <person name="Gregory S.G."/>
            <person name="Barlow K.F."/>
            <person name="McLay K.E."/>
            <person name="Kaul R."/>
            <person name="Swarbreck D."/>
            <person name="Dunham A."/>
            <person name="Scott C.E."/>
            <person name="Howe K.L."/>
            <person name="Woodfine K."/>
            <person name="Spencer C.C.A."/>
            <person name="Jones M.C."/>
            <person name="Gillson C."/>
            <person name="Searle S."/>
            <person name="Zhou Y."/>
            <person name="Kokocinski F."/>
            <person name="McDonald L."/>
            <person name="Evans R."/>
            <person name="Phillips K."/>
            <person name="Atkinson A."/>
            <person name="Cooper R."/>
            <person name="Jones C."/>
            <person name="Hall R.E."/>
            <person name="Andrews T.D."/>
            <person name="Lloyd C."/>
            <person name="Ainscough R."/>
            <person name="Almeida J.P."/>
            <person name="Ambrose K.D."/>
            <person name="Anderson F."/>
            <person name="Andrew R.W."/>
            <person name="Ashwell R.I.S."/>
            <person name="Aubin K."/>
            <person name="Babbage A.K."/>
            <person name="Bagguley C.L."/>
            <person name="Bailey J."/>
            <person name="Beasley H."/>
            <person name="Bethel G."/>
            <person name="Bird C.P."/>
            <person name="Bray-Allen S."/>
            <person name="Brown J.Y."/>
            <person name="Brown A.J."/>
            <person name="Buckley D."/>
            <person name="Burton J."/>
            <person name="Bye J."/>
            <person name="Carder C."/>
            <person name="Chapman J.C."/>
            <person name="Clark S.Y."/>
            <person name="Clarke G."/>
            <person name="Clee C."/>
            <person name="Cobley V."/>
            <person name="Collier R.E."/>
            <person name="Corby N."/>
            <person name="Coville G.J."/>
            <person name="Davies J."/>
            <person name="Deadman R."/>
            <person name="Dunn M."/>
            <person name="Earthrowl M."/>
            <person name="Ellington A.G."/>
            <person name="Errington H."/>
            <person name="Frankish A."/>
            <person name="Frankland J."/>
            <person name="French L."/>
            <person name="Garner P."/>
            <person name="Garnett J."/>
            <person name="Gay L."/>
            <person name="Ghori M.R.J."/>
            <person name="Gibson R."/>
            <person name="Gilby L.M."/>
            <person name="Gillett W."/>
            <person name="Glithero R.J."/>
            <person name="Grafham D.V."/>
            <person name="Griffiths C."/>
            <person name="Griffiths-Jones S."/>
            <person name="Grocock R."/>
            <person name="Hammond S."/>
            <person name="Harrison E.S.I."/>
            <person name="Hart E."/>
            <person name="Haugen E."/>
            <person name="Heath P.D."/>
            <person name="Holmes S."/>
            <person name="Holt K."/>
            <person name="Howden P.J."/>
            <person name="Hunt A.R."/>
            <person name="Hunt S.E."/>
            <person name="Hunter G."/>
            <person name="Isherwood J."/>
            <person name="James R."/>
            <person name="Johnson C."/>
            <person name="Johnson D."/>
            <person name="Joy A."/>
            <person name="Kay M."/>
            <person name="Kershaw J.K."/>
            <person name="Kibukawa M."/>
            <person name="Kimberley A.M."/>
            <person name="King A."/>
            <person name="Knights A.J."/>
            <person name="Lad H."/>
            <person name="Laird G."/>
            <person name="Lawlor S."/>
            <person name="Leongamornlert D.A."/>
            <person name="Lloyd D.M."/>
            <person name="Loveland J."/>
            <person name="Lovell J."/>
            <person name="Lush M.J."/>
            <person name="Lyne R."/>
            <person name="Martin S."/>
            <person name="Mashreghi-Mohammadi M."/>
            <person name="Matthews L."/>
            <person name="Matthews N.S.W."/>
            <person name="McLaren S."/>
            <person name="Milne S."/>
            <person name="Mistry S."/>
            <person name="Moore M.J.F."/>
            <person name="Nickerson T."/>
            <person name="O'Dell C.N."/>
            <person name="Oliver K."/>
            <person name="Palmeiri A."/>
            <person name="Palmer S.A."/>
            <person name="Parker A."/>
            <person name="Patel D."/>
            <person name="Pearce A.V."/>
            <person name="Peck A.I."/>
            <person name="Pelan S."/>
            <person name="Phelps K."/>
            <person name="Phillimore B.J."/>
            <person name="Plumb R."/>
            <person name="Rajan J."/>
            <person name="Raymond C."/>
            <person name="Rouse G."/>
            <person name="Saenphimmachak C."/>
            <person name="Sehra H.K."/>
            <person name="Sheridan E."/>
            <person name="Shownkeen R."/>
            <person name="Sims S."/>
            <person name="Skuce C.D."/>
            <person name="Smith M."/>
            <person name="Steward C."/>
            <person name="Subramanian S."/>
            <person name="Sycamore N."/>
            <person name="Tracey A."/>
            <person name="Tromans A."/>
            <person name="Van Helmond Z."/>
            <person name="Wall M."/>
            <person name="Wallis J.M."/>
            <person name="White S."/>
            <person name="Whitehead S.L."/>
            <person name="Wilkinson J.E."/>
            <person name="Willey D.L."/>
            <person name="Williams H."/>
            <person name="Wilming L."/>
            <person name="Wray P.W."/>
            <person name="Wu Z."/>
            <person name="Coulson A."/>
            <person name="Vaudin M."/>
            <person name="Sulston J.E."/>
            <person name="Durbin R.M."/>
            <person name="Hubbard T."/>
            <person name="Wooster R."/>
            <person name="Dunham I."/>
            <person name="Carter N.P."/>
            <person name="McVean G."/>
            <person name="Ross M.T."/>
            <person name="Harrow J."/>
            <person name="Olson M.V."/>
            <person name="Beck S."/>
            <person name="Rogers J."/>
            <person name="Bentley D.R."/>
        </authorList>
    </citation>
    <scope>NUCLEOTIDE SEQUENCE [LARGE SCALE GENOMIC DNA]</scope>
</reference>
<reference key="3">
    <citation type="submission" date="2005-09" db="EMBL/GenBank/DDBJ databases">
        <authorList>
            <person name="Mural R.J."/>
            <person name="Istrail S."/>
            <person name="Sutton G.G."/>
            <person name="Florea L."/>
            <person name="Halpern A.L."/>
            <person name="Mobarry C.M."/>
            <person name="Lippert R."/>
            <person name="Walenz B."/>
            <person name="Shatkay H."/>
            <person name="Dew I."/>
            <person name="Miller J.R."/>
            <person name="Flanigan M.J."/>
            <person name="Edwards N.J."/>
            <person name="Bolanos R."/>
            <person name="Fasulo D."/>
            <person name="Halldorsson B.V."/>
            <person name="Hannenhalli S."/>
            <person name="Turner R."/>
            <person name="Yooseph S."/>
            <person name="Lu F."/>
            <person name="Nusskern D.R."/>
            <person name="Shue B.C."/>
            <person name="Zheng X.H."/>
            <person name="Zhong F."/>
            <person name="Delcher A.L."/>
            <person name="Huson D.H."/>
            <person name="Kravitz S.A."/>
            <person name="Mouchard L."/>
            <person name="Reinert K."/>
            <person name="Remington K.A."/>
            <person name="Clark A.G."/>
            <person name="Waterman M.S."/>
            <person name="Eichler E.E."/>
            <person name="Adams M.D."/>
            <person name="Hunkapiller M.W."/>
            <person name="Myers E.W."/>
            <person name="Venter J.C."/>
        </authorList>
    </citation>
    <scope>NUCLEOTIDE SEQUENCE [LARGE SCALE GENOMIC DNA]</scope>
</reference>
<reference key="4">
    <citation type="journal article" date="2004" name="Genome Res.">
        <title>The status, quality, and expansion of the NIH full-length cDNA project: the Mammalian Gene Collection (MGC).</title>
        <authorList>
            <consortium name="The MGC Project Team"/>
        </authorList>
    </citation>
    <scope>NUCLEOTIDE SEQUENCE [LARGE SCALE MRNA]</scope>
    <source>
        <tissue>Cervix</tissue>
    </source>
</reference>
<protein>
    <recommendedName>
        <fullName>GA-binding protein subunit beta-2</fullName>
        <shortName>GABP subunit beta-2</shortName>
        <shortName>GABPB-2</shortName>
    </recommendedName>
</protein>
<organism>
    <name type="scientific">Homo sapiens</name>
    <name type="common">Human</name>
    <dbReference type="NCBI Taxonomy" id="9606"/>
    <lineage>
        <taxon>Eukaryota</taxon>
        <taxon>Metazoa</taxon>
        <taxon>Chordata</taxon>
        <taxon>Craniata</taxon>
        <taxon>Vertebrata</taxon>
        <taxon>Euteleostomi</taxon>
        <taxon>Mammalia</taxon>
        <taxon>Eutheria</taxon>
        <taxon>Euarchontoglires</taxon>
        <taxon>Primates</taxon>
        <taxon>Haplorrhini</taxon>
        <taxon>Catarrhini</taxon>
        <taxon>Hominidae</taxon>
        <taxon>Homo</taxon>
    </lineage>
</organism>
<dbReference type="EMBL" id="AK092230">
    <property type="protein sequence ID" value="BAC03833.1"/>
    <property type="molecule type" value="mRNA"/>
</dbReference>
<dbReference type="EMBL" id="AL691467">
    <property type="status" value="NOT_ANNOTATED_CDS"/>
    <property type="molecule type" value="Genomic_DNA"/>
</dbReference>
<dbReference type="EMBL" id="AL590133">
    <property type="status" value="NOT_ANNOTATED_CDS"/>
    <property type="molecule type" value="Genomic_DNA"/>
</dbReference>
<dbReference type="EMBL" id="AL592424">
    <property type="status" value="NOT_ANNOTATED_CDS"/>
    <property type="molecule type" value="Genomic_DNA"/>
</dbReference>
<dbReference type="EMBL" id="CH471121">
    <property type="protein sequence ID" value="EAW53474.1"/>
    <property type="molecule type" value="Genomic_DNA"/>
</dbReference>
<dbReference type="EMBL" id="CH471121">
    <property type="protein sequence ID" value="EAW53475.1"/>
    <property type="molecule type" value="Genomic_DNA"/>
</dbReference>
<dbReference type="EMBL" id="BC027033">
    <property type="protein sequence ID" value="AAH27033.1"/>
    <property type="molecule type" value="mRNA"/>
</dbReference>
<dbReference type="CCDS" id="CCDS983.1"/>
<dbReference type="RefSeq" id="NP_001310837.1">
    <property type="nucleotide sequence ID" value="NM_001323908.2"/>
</dbReference>
<dbReference type="RefSeq" id="NP_653219.1">
    <property type="nucleotide sequence ID" value="NM_144618.3"/>
</dbReference>
<dbReference type="RefSeq" id="XP_016855738.1">
    <property type="nucleotide sequence ID" value="XM_017000249.1"/>
</dbReference>
<dbReference type="SMR" id="Q8TAK5"/>
<dbReference type="BioGRID" id="126004">
    <property type="interactions" value="13"/>
</dbReference>
<dbReference type="CORUM" id="Q8TAK5"/>
<dbReference type="FunCoup" id="Q8TAK5">
    <property type="interactions" value="1826"/>
</dbReference>
<dbReference type="IntAct" id="Q8TAK5">
    <property type="interactions" value="14"/>
</dbReference>
<dbReference type="MINT" id="Q8TAK5"/>
<dbReference type="STRING" id="9606.ENSP00000357914"/>
<dbReference type="GlyCosmos" id="Q8TAK5">
    <property type="glycosylation" value="5 sites, 1 glycan"/>
</dbReference>
<dbReference type="GlyGen" id="Q8TAK5">
    <property type="glycosylation" value="5 sites, 1 O-linked glycan (5 sites)"/>
</dbReference>
<dbReference type="iPTMnet" id="Q8TAK5"/>
<dbReference type="PhosphoSitePlus" id="Q8TAK5"/>
<dbReference type="BioMuta" id="GABPB2"/>
<dbReference type="DMDM" id="74751355"/>
<dbReference type="jPOST" id="Q8TAK5"/>
<dbReference type="MassIVE" id="Q8TAK5"/>
<dbReference type="PaxDb" id="9606-ENSP00000357914"/>
<dbReference type="PeptideAtlas" id="Q8TAK5"/>
<dbReference type="ProteomicsDB" id="73888"/>
<dbReference type="Pumba" id="Q8TAK5"/>
<dbReference type="Antibodypedia" id="34049">
    <property type="antibodies" value="241 antibodies from 25 providers"/>
</dbReference>
<dbReference type="DNASU" id="126626"/>
<dbReference type="Ensembl" id="ENST00000368918.8">
    <property type="protein sequence ID" value="ENSP00000357914.3"/>
    <property type="gene ID" value="ENSG00000143458.12"/>
</dbReference>
<dbReference type="GeneID" id="126626"/>
<dbReference type="KEGG" id="hsa:126626"/>
<dbReference type="MANE-Select" id="ENST00000368918.8">
    <property type="protein sequence ID" value="ENSP00000357914.3"/>
    <property type="RefSeq nucleotide sequence ID" value="NM_144618.3"/>
    <property type="RefSeq protein sequence ID" value="NP_653219.1"/>
</dbReference>
<dbReference type="UCSC" id="uc001ewr.3">
    <property type="organism name" value="human"/>
</dbReference>
<dbReference type="AGR" id="HGNC:28441"/>
<dbReference type="CTD" id="126626"/>
<dbReference type="DisGeNET" id="126626"/>
<dbReference type="GeneCards" id="GABPB2"/>
<dbReference type="HGNC" id="HGNC:28441">
    <property type="gene designation" value="GABPB2"/>
</dbReference>
<dbReference type="HPA" id="ENSG00000143458">
    <property type="expression patterns" value="Low tissue specificity"/>
</dbReference>
<dbReference type="neXtProt" id="NX_Q8TAK5"/>
<dbReference type="OpenTargets" id="ENSG00000143458"/>
<dbReference type="PharmGKB" id="PA164741559"/>
<dbReference type="VEuPathDB" id="HostDB:ENSG00000143458"/>
<dbReference type="eggNOG" id="ENOG502QRTX">
    <property type="taxonomic scope" value="Eukaryota"/>
</dbReference>
<dbReference type="GeneTree" id="ENSGT00940000156794"/>
<dbReference type="InParanoid" id="Q8TAK5"/>
<dbReference type="OMA" id="NMNQVNL"/>
<dbReference type="OrthoDB" id="341259at2759"/>
<dbReference type="PAN-GO" id="Q8TAK5">
    <property type="GO annotations" value="3 GO annotations based on evolutionary models"/>
</dbReference>
<dbReference type="PhylomeDB" id="Q8TAK5"/>
<dbReference type="TreeFam" id="TF326036"/>
<dbReference type="PathwayCommons" id="Q8TAK5"/>
<dbReference type="SignaLink" id="Q8TAK5"/>
<dbReference type="SIGNOR" id="Q8TAK5"/>
<dbReference type="BioGRID-ORCS" id="126626">
    <property type="hits" value="41 hits in 1159 CRISPR screens"/>
</dbReference>
<dbReference type="ChiTaRS" id="GABPB2">
    <property type="organism name" value="human"/>
</dbReference>
<dbReference type="GenomeRNAi" id="126626"/>
<dbReference type="Pharos" id="Q8TAK5">
    <property type="development level" value="Tbio"/>
</dbReference>
<dbReference type="PRO" id="PR:Q8TAK5"/>
<dbReference type="Proteomes" id="UP000005640">
    <property type="component" value="Chromosome 1"/>
</dbReference>
<dbReference type="RNAct" id="Q8TAK5">
    <property type="molecule type" value="protein"/>
</dbReference>
<dbReference type="Bgee" id="ENSG00000143458">
    <property type="expression patterns" value="Expressed in oviduct epithelium and 183 other cell types or tissues"/>
</dbReference>
<dbReference type="ExpressionAtlas" id="Q8TAK5">
    <property type="expression patterns" value="baseline and differential"/>
</dbReference>
<dbReference type="GO" id="GO:0005634">
    <property type="term" value="C:nucleus"/>
    <property type="evidence" value="ECO:0000314"/>
    <property type="project" value="MGI"/>
</dbReference>
<dbReference type="GO" id="GO:0042802">
    <property type="term" value="F:identical protein binding"/>
    <property type="evidence" value="ECO:0007669"/>
    <property type="project" value="Ensembl"/>
</dbReference>
<dbReference type="GO" id="GO:0000976">
    <property type="term" value="F:transcription cis-regulatory region binding"/>
    <property type="evidence" value="ECO:0000314"/>
    <property type="project" value="MGI"/>
</dbReference>
<dbReference type="GO" id="GO:0045944">
    <property type="term" value="P:positive regulation of transcription by RNA polymerase II"/>
    <property type="evidence" value="ECO:0000314"/>
    <property type="project" value="MGI"/>
</dbReference>
<dbReference type="FunFam" id="1.25.40.20:FF:000025">
    <property type="entry name" value="GA-binding protein subunit beta-1 isoform X1"/>
    <property type="match status" value="1"/>
</dbReference>
<dbReference type="Gene3D" id="1.25.40.20">
    <property type="entry name" value="Ankyrin repeat-containing domain"/>
    <property type="match status" value="1"/>
</dbReference>
<dbReference type="InterPro" id="IPR050663">
    <property type="entry name" value="Ankyrin-SOCS_Box"/>
</dbReference>
<dbReference type="InterPro" id="IPR002110">
    <property type="entry name" value="Ankyrin_rpt"/>
</dbReference>
<dbReference type="InterPro" id="IPR036770">
    <property type="entry name" value="Ankyrin_rpt-contain_sf"/>
</dbReference>
<dbReference type="PANTHER" id="PTHR24193">
    <property type="entry name" value="ANKYRIN REPEAT PROTEIN"/>
    <property type="match status" value="1"/>
</dbReference>
<dbReference type="PANTHER" id="PTHR24193:SF86">
    <property type="entry name" value="GA-BINDING PROTEIN SUBUNIT BETA-2"/>
    <property type="match status" value="1"/>
</dbReference>
<dbReference type="Pfam" id="PF12796">
    <property type="entry name" value="Ank_2"/>
    <property type="match status" value="2"/>
</dbReference>
<dbReference type="PRINTS" id="PR01415">
    <property type="entry name" value="ANKYRIN"/>
</dbReference>
<dbReference type="SMART" id="SM00248">
    <property type="entry name" value="ANK"/>
    <property type="match status" value="4"/>
</dbReference>
<dbReference type="SUPFAM" id="SSF48403">
    <property type="entry name" value="Ankyrin repeat"/>
    <property type="match status" value="1"/>
</dbReference>
<dbReference type="PROSITE" id="PS50297">
    <property type="entry name" value="ANK_REP_REGION"/>
    <property type="match status" value="1"/>
</dbReference>
<dbReference type="PROSITE" id="PS50088">
    <property type="entry name" value="ANK_REPEAT"/>
    <property type="match status" value="3"/>
</dbReference>
<feature type="chain" id="PRO_0000325908" description="GA-binding protein subunit beta-2">
    <location>
        <begin position="1"/>
        <end position="448"/>
    </location>
</feature>
<feature type="repeat" description="ANK 1">
    <location>
        <begin position="5"/>
        <end position="34"/>
    </location>
</feature>
<feature type="repeat" description="ANK 2">
    <location>
        <begin position="37"/>
        <end position="66"/>
    </location>
</feature>
<feature type="repeat" description="ANK 3">
    <location>
        <begin position="70"/>
        <end position="99"/>
    </location>
</feature>
<feature type="repeat" description="ANK 4">
    <location>
        <begin position="103"/>
        <end position="132"/>
    </location>
</feature>
<feature type="repeat" description="ANK 5">
    <location>
        <begin position="136"/>
        <end position="166"/>
    </location>
</feature>
<feature type="region of interest" description="Disordered" evidence="4">
    <location>
        <begin position="325"/>
        <end position="354"/>
    </location>
</feature>
<feature type="region of interest" description="Disordered" evidence="4">
    <location>
        <begin position="420"/>
        <end position="448"/>
    </location>
</feature>
<feature type="coiled-coil region" evidence="3">
    <location>
        <begin position="345"/>
        <end position="395"/>
    </location>
</feature>
<feature type="compositionally biased region" description="Basic and acidic residues" evidence="4">
    <location>
        <begin position="337"/>
        <end position="354"/>
    </location>
</feature>
<feature type="compositionally biased region" description="Polar residues" evidence="4">
    <location>
        <begin position="428"/>
        <end position="448"/>
    </location>
</feature>
<feature type="modified residue" description="Phosphoserine" evidence="2">
    <location>
        <position position="256"/>
    </location>
</feature>
<feature type="sequence variant" id="VAR_039950" description="In dbSNP:rs11204774.">
    <original>V</original>
    <variation>I</variation>
    <location>
        <position position="62"/>
    </location>
</feature>
<feature type="sequence conflict" description="In Ref. 1; BAC03833." evidence="5" ref="1">
    <original>A</original>
    <variation>S</variation>
    <location>
        <position position="13"/>
    </location>
</feature>
<feature type="sequence conflict" description="In Ref. 1; BAC03833." evidence="5" ref="1">
    <original>A</original>
    <variation>S</variation>
    <location>
        <position position="144"/>
    </location>
</feature>
<keyword id="KW-0040">ANK repeat</keyword>
<keyword id="KW-0175">Coiled coil</keyword>
<keyword id="KW-0539">Nucleus</keyword>
<keyword id="KW-0597">Phosphoprotein</keyword>
<keyword id="KW-1267">Proteomics identification</keyword>
<keyword id="KW-1185">Reference proteome</keyword>
<keyword id="KW-0677">Repeat</keyword>
<keyword id="KW-0804">Transcription</keyword>
<keyword id="KW-0805">Transcription regulation</keyword>
<evidence type="ECO:0000250" key="1"/>
<evidence type="ECO:0000250" key="2">
    <source>
        <dbReference type="UniProtKB" id="P81069"/>
    </source>
</evidence>
<evidence type="ECO:0000255" key="3"/>
<evidence type="ECO:0000256" key="4">
    <source>
        <dbReference type="SAM" id="MobiDB-lite"/>
    </source>
</evidence>
<evidence type="ECO:0000305" key="5"/>
<accession>Q8TAK5</accession>
<accession>B1AVJ8</accession>
<accession>D3DV14</accession>
<accession>Q8NAR5</accession>
<sequence>MSLVDLGKRLLEAARKGQDDEVRTLMANGAPFTTDWLGTSPLHLAAQYGHYSTAEVLLRAGVSRDARTKVDRTPLHMAAADGHAHIVELLVRNGADVNAKDMLKMTALHWATERHHRDVVELLIKYGADVHAFSKFDKSAFDIALEKNNAEILVILQEAMQNQVNVNPERANPVTDPVSMAAPFIFTSGEVVNLASLISSTNTKTTSGDPHASTVQFSNSTTSVLATLAALAEASVPLSNSHRATANTEEIIEGNSVDSSIQQVMGSGGQRVITIVTDGVPLGNIQTSIPTGGIGQPFIVTVQDGQQVLTVPAGKVAEETVIKEEEEEKLPLTKKPRIGEKTNSVEESKEGNERELLQQQLQEANRRAQEYRHQLLKKEQEAEQYRLKLEAIARQQPNGVDFTMVEEVAEVDAVVVTEGELEERETKVTGSAGTTEPHTRVSMATVSS</sequence>
<name>GABP2_HUMAN</name>